<keyword id="KW-0002">3D-structure</keyword>
<keyword id="KW-0875">Capsule</keyword>
<keyword id="KW-0614">Plasmid</keyword>
<keyword id="KW-1185">Reference proteome</keyword>
<keyword id="KW-0964">Secreted</keyword>
<keyword id="KW-0732">Signal</keyword>
<proteinExistence type="evidence at protein level"/>
<comment type="interaction">
    <interactant intactId="EBI-1036572">
        <id>P26948</id>
    </interactant>
    <interactant intactId="EBI-1036581">
        <id>P26926</id>
        <label>caf1M</label>
    </interactant>
    <organismsDiffer>false</organismsDiffer>
    <experiments>6</experiments>
</comment>
<comment type="subcellular location">
    <subcellularLocation>
        <location>Secreted</location>
        <location>Capsule</location>
    </subcellularLocation>
</comment>
<sequence>MKKISSVIAIALFGTIATANAADLTASTTATATLVEPARITLTYKEGAPITIMDNGNIDTELLVGTLTLGGYKTGTTSTSVNFTDAAGDPMYLTFTSQDGNNHQFTTKVIGKDSRDFDISPKVNGENLVGDDVVLATGSQDFFVRSIGSKGGKLAAGKYTDAVTVTVSNQ</sequence>
<feature type="signal peptide" evidence="1">
    <location>
        <begin position="1"/>
        <end position="21"/>
    </location>
</feature>
<feature type="chain" id="PRO_0000020839" description="F1 capsule antigen">
    <location>
        <begin position="22"/>
        <end position="170"/>
    </location>
</feature>
<feature type="region of interest" description="Contains potential antigenic determinants that may stimulate T-cells">
    <location>
        <begin position="100"/>
        <end position="150"/>
    </location>
</feature>
<feature type="strand" evidence="2">
    <location>
        <begin position="24"/>
        <end position="35"/>
    </location>
</feature>
<feature type="strand" evidence="3">
    <location>
        <begin position="38"/>
        <end position="46"/>
    </location>
</feature>
<feature type="strand" evidence="2">
    <location>
        <begin position="50"/>
        <end position="52"/>
    </location>
</feature>
<feature type="strand" evidence="4">
    <location>
        <begin position="54"/>
        <end position="56"/>
    </location>
</feature>
<feature type="strand" evidence="3">
    <location>
        <begin position="63"/>
        <end position="70"/>
    </location>
</feature>
<feature type="helix" evidence="3">
    <location>
        <begin position="78"/>
        <end position="80"/>
    </location>
</feature>
<feature type="strand" evidence="3">
    <location>
        <begin position="81"/>
        <end position="84"/>
    </location>
</feature>
<feature type="strand" evidence="3">
    <location>
        <begin position="93"/>
        <end position="101"/>
    </location>
</feature>
<feature type="strand" evidence="3">
    <location>
        <begin position="104"/>
        <end position="112"/>
    </location>
</feature>
<feature type="strand" evidence="3">
    <location>
        <begin position="128"/>
        <end position="130"/>
    </location>
</feature>
<feature type="strand" evidence="3">
    <location>
        <begin position="137"/>
        <end position="148"/>
    </location>
</feature>
<feature type="strand" evidence="3">
    <location>
        <begin position="156"/>
        <end position="168"/>
    </location>
</feature>
<dbReference type="EMBL" id="X61996">
    <property type="protein sequence ID" value="CAA43966.1"/>
    <property type="molecule type" value="Genomic_DNA"/>
</dbReference>
<dbReference type="EMBL" id="AF074611">
    <property type="protein sequence ID" value="AAC82758.1"/>
    <property type="molecule type" value="Genomic_DNA"/>
</dbReference>
<dbReference type="EMBL" id="AF053947">
    <property type="protein sequence ID" value="AAC13218.1"/>
    <property type="molecule type" value="Genomic_DNA"/>
</dbReference>
<dbReference type="EMBL" id="AL117211">
    <property type="protein sequence ID" value="CAB55266.1"/>
    <property type="molecule type" value="Genomic_DNA"/>
</dbReference>
<dbReference type="EMBL" id="AE017045">
    <property type="protein sequence ID" value="AAS58714.1"/>
    <property type="molecule type" value="Genomic_DNA"/>
</dbReference>
<dbReference type="PIR" id="S13008">
    <property type="entry name" value="S13008"/>
</dbReference>
<dbReference type="RefSeq" id="NP_395430.1">
    <property type="nucleotide sequence ID" value="NC_003134.1"/>
</dbReference>
<dbReference type="RefSeq" id="NP_857692.1">
    <property type="nucleotide sequence ID" value="NC_004835.1"/>
</dbReference>
<dbReference type="RefSeq" id="WP_002216410.1">
    <property type="nucleotide sequence ID" value="NZ_WUCM01000058.1"/>
</dbReference>
<dbReference type="PDB" id="1P5U">
    <property type="method" value="X-ray"/>
    <property type="resolution" value="1.99 A"/>
    <property type="chains" value="B=22-170, C=35-170"/>
</dbReference>
<dbReference type="PDB" id="1P5V">
    <property type="method" value="X-ray"/>
    <property type="resolution" value="1.70 A"/>
    <property type="chains" value="B=35-170"/>
</dbReference>
<dbReference type="PDB" id="1Z9S">
    <property type="method" value="X-ray"/>
    <property type="resolution" value="2.20 A"/>
    <property type="chains" value="B/C=22-170"/>
</dbReference>
<dbReference type="PDB" id="3DOS">
    <property type="method" value="X-ray"/>
    <property type="resolution" value="2.40 A"/>
    <property type="chains" value="B/C/E/F=22-170"/>
</dbReference>
<dbReference type="PDB" id="3DPB">
    <property type="method" value="X-ray"/>
    <property type="resolution" value="2.20 A"/>
    <property type="chains" value="B/C=22-170"/>
</dbReference>
<dbReference type="PDB" id="3DSN">
    <property type="method" value="X-ray"/>
    <property type="resolution" value="2.20 A"/>
    <property type="chains" value="B/C/E/F=34-170"/>
</dbReference>
<dbReference type="PDB" id="4AYF">
    <property type="method" value="X-ray"/>
    <property type="resolution" value="2.07 A"/>
    <property type="chains" value="B=22-170"/>
</dbReference>
<dbReference type="PDB" id="4AZ8">
    <property type="method" value="X-ray"/>
    <property type="resolution" value="2.65 A"/>
    <property type="chains" value="B=22-170"/>
</dbReference>
<dbReference type="PDB" id="4B0M">
    <property type="method" value="X-ray"/>
    <property type="resolution" value="1.80 A"/>
    <property type="chains" value="B=22-170"/>
</dbReference>
<dbReference type="PDBsum" id="1P5U"/>
<dbReference type="PDBsum" id="1P5V"/>
<dbReference type="PDBsum" id="1Z9S"/>
<dbReference type="PDBsum" id="3DOS"/>
<dbReference type="PDBsum" id="3DPB"/>
<dbReference type="PDBsum" id="3DSN"/>
<dbReference type="PDBsum" id="4AYF"/>
<dbReference type="PDBsum" id="4AZ8"/>
<dbReference type="PDBsum" id="4B0M"/>
<dbReference type="SMR" id="P26948"/>
<dbReference type="DIP" id="DIP-35243N"/>
<dbReference type="IntAct" id="P26948">
    <property type="interactions" value="2"/>
</dbReference>
<dbReference type="ABCD" id="P26948">
    <property type="antibodies" value="19 sequenced antibodies"/>
</dbReference>
<dbReference type="DNASU" id="1149244"/>
<dbReference type="EnsemblBacteria" id="AAS58714">
    <property type="protein sequence ID" value="AAS58714"/>
    <property type="gene ID" value="YP_pMT082"/>
</dbReference>
<dbReference type="GeneID" id="57977636"/>
<dbReference type="KEGG" id="ype:YPMT1.84"/>
<dbReference type="KEGG" id="ypk:caf1.pl"/>
<dbReference type="KEGG" id="ypm:YP_pMT082"/>
<dbReference type="PATRIC" id="fig|214092.21.peg.212"/>
<dbReference type="HOGENOM" id="CLU_1570061_0_0_6"/>
<dbReference type="OMA" id="GNIPQPW"/>
<dbReference type="EvolutionaryTrace" id="P26948"/>
<dbReference type="PRO" id="PR:P26948"/>
<dbReference type="Proteomes" id="UP000000815">
    <property type="component" value="Plasmid pMT1"/>
</dbReference>
<dbReference type="Proteomes" id="UP000001019">
    <property type="component" value="Plasmid pMT1"/>
</dbReference>
<dbReference type="Proteomes" id="UP000002490">
    <property type="component" value="Plasmid pMT-1"/>
</dbReference>
<dbReference type="GO" id="GO:0042603">
    <property type="term" value="C:capsule"/>
    <property type="evidence" value="ECO:0007669"/>
    <property type="project" value="UniProtKB-SubCell"/>
</dbReference>
<dbReference type="GO" id="GO:0005576">
    <property type="term" value="C:extracellular region"/>
    <property type="evidence" value="ECO:0007669"/>
    <property type="project" value="UniProtKB-KW"/>
</dbReference>
<dbReference type="GO" id="GO:0009289">
    <property type="term" value="C:pilus"/>
    <property type="evidence" value="ECO:0007669"/>
    <property type="project" value="InterPro"/>
</dbReference>
<dbReference type="GO" id="GO:0007155">
    <property type="term" value="P:cell adhesion"/>
    <property type="evidence" value="ECO:0007669"/>
    <property type="project" value="InterPro"/>
</dbReference>
<dbReference type="Gene3D" id="2.60.40.1090">
    <property type="entry name" value="Fimbrial-type adhesion domain"/>
    <property type="match status" value="1"/>
</dbReference>
<dbReference type="InterPro" id="IPR036937">
    <property type="entry name" value="Adhesion_dom_fimbrial_sf"/>
</dbReference>
<dbReference type="InterPro" id="IPR008966">
    <property type="entry name" value="Adhesion_dom_sf"/>
</dbReference>
<dbReference type="InterPro" id="IPR015335">
    <property type="entry name" value="Caf1"/>
</dbReference>
<dbReference type="Pfam" id="PF09255">
    <property type="entry name" value="Antig_Caf1"/>
    <property type="match status" value="1"/>
</dbReference>
<dbReference type="SUPFAM" id="SSF49401">
    <property type="entry name" value="Bacterial adhesins"/>
    <property type="match status" value="1"/>
</dbReference>
<evidence type="ECO:0000255" key="1"/>
<evidence type="ECO:0007829" key="2">
    <source>
        <dbReference type="PDB" id="1P5U"/>
    </source>
</evidence>
<evidence type="ECO:0007829" key="3">
    <source>
        <dbReference type="PDB" id="1P5V"/>
    </source>
</evidence>
<evidence type="ECO:0007829" key="4">
    <source>
        <dbReference type="PDB" id="3DOS"/>
    </source>
</evidence>
<protein>
    <recommendedName>
        <fullName>F1 capsule antigen</fullName>
    </recommendedName>
</protein>
<gene>
    <name type="primary">caf1</name>
    <name type="ordered locus">YPMT1.84</name>
    <name type="ordered locus">Y1100</name>
    <name type="ordered locus">YP_pMT082</name>
</gene>
<reference key="1">
    <citation type="journal article" date="1990" name="FEBS Lett.">
        <title>Nucleotide sequence of the Yersinia pestis gene encoding F1 antigen and the primary structure of the protein. Putative T and B cell epitopes.</title>
        <authorList>
            <person name="Galyov E.E."/>
            <person name="Smirnov O.Y."/>
            <person name="Karlishev A.V."/>
            <person name="Volkovoy K.I."/>
            <person name="Denesyuk A.I."/>
            <person name="Nazimov I.V."/>
            <person name="Rubtsov K.S."/>
            <person name="Abramov V.M."/>
            <person name="Dalvadyanz S.M."/>
            <person name="Zav'Yalov V.P."/>
        </authorList>
    </citation>
    <scope>NUCLEOTIDE SEQUENCE [GENOMIC DNA]</scope>
    <source>
        <plasmid>pFra</plasmid>
    </source>
</reference>
<reference key="2">
    <citation type="journal article" date="1998" name="J. Bacteriol.">
        <title>Structural organization of virulence-associated plasmids of Yersinia pestis.</title>
        <authorList>
            <person name="Hu P."/>
            <person name="Elliott J."/>
            <person name="McCready P."/>
            <person name="Skowronski E."/>
            <person name="Garnes J."/>
            <person name="Kobayashi A."/>
            <person name="Brubaker R.R."/>
            <person name="Garcia E."/>
        </authorList>
    </citation>
    <scope>NUCLEOTIDE SEQUENCE [GENOMIC DNA]</scope>
    <source>
        <strain>KIM5 / Biovar Mediaevalis</strain>
        <plasmid>pMT1 (pMT-1)</plasmid>
    </source>
</reference>
<reference key="3">
    <citation type="journal article" date="1998" name="Infect. Immun.">
        <title>Complete DNA sequence and detailed analysis of the Yersinia pestis KIM5 plasmid encoding murine toxin and capsular antigen.</title>
        <authorList>
            <person name="Lindler L.E."/>
            <person name="Plano G.V."/>
            <person name="Burland V."/>
            <person name="Mayhew G.F."/>
            <person name="Blattner F.R."/>
        </authorList>
    </citation>
    <scope>NUCLEOTIDE SEQUENCE [LARGE SCALE GENOMIC DNA]</scope>
    <source>
        <strain>KIM10+ / Biovar Mediaevalis</strain>
        <plasmid>pMT1 (pMT-1)</plasmid>
    </source>
</reference>
<reference key="4">
    <citation type="journal article" date="2001" name="Nature">
        <title>Genome sequence of Yersinia pestis, the causative agent of plague.</title>
        <authorList>
            <person name="Parkhill J."/>
            <person name="Wren B.W."/>
            <person name="Thomson N.R."/>
            <person name="Titball R.W."/>
            <person name="Holden M.T.G."/>
            <person name="Prentice M.B."/>
            <person name="Sebaihia M."/>
            <person name="James K.D."/>
            <person name="Churcher C.M."/>
            <person name="Mungall K.L."/>
            <person name="Baker S."/>
            <person name="Basham D."/>
            <person name="Bentley S.D."/>
            <person name="Brooks K."/>
            <person name="Cerdeno-Tarraga A.-M."/>
            <person name="Chillingworth T."/>
            <person name="Cronin A."/>
            <person name="Davies R.M."/>
            <person name="Davis P."/>
            <person name="Dougan G."/>
            <person name="Feltwell T."/>
            <person name="Hamlin N."/>
            <person name="Holroyd S."/>
            <person name="Jagels K."/>
            <person name="Karlyshev A.V."/>
            <person name="Leather S."/>
            <person name="Moule S."/>
            <person name="Oyston P.C.F."/>
            <person name="Quail M.A."/>
            <person name="Rutherford K.M."/>
            <person name="Simmonds M."/>
            <person name="Skelton J."/>
            <person name="Stevens K."/>
            <person name="Whitehead S."/>
            <person name="Barrell B.G."/>
        </authorList>
    </citation>
    <scope>NUCLEOTIDE SEQUENCE [LARGE SCALE GENOMIC DNA]</scope>
    <source>
        <strain>CO-92 / Biovar Orientalis</strain>
        <plasmid>pMT1 (pMT-1)</plasmid>
    </source>
</reference>
<reference key="5">
    <citation type="journal article" date="2004" name="DNA Res.">
        <title>Complete genome sequence of Yersinia pestis strain 91001, an isolate avirulent to humans.</title>
        <authorList>
            <person name="Song Y."/>
            <person name="Tong Z."/>
            <person name="Wang J."/>
            <person name="Wang L."/>
            <person name="Guo Z."/>
            <person name="Han Y."/>
            <person name="Zhang J."/>
            <person name="Pei D."/>
            <person name="Zhou D."/>
            <person name="Qin H."/>
            <person name="Pang X."/>
            <person name="Han Y."/>
            <person name="Zhai J."/>
            <person name="Li M."/>
            <person name="Cui B."/>
            <person name="Qi Z."/>
            <person name="Jin L."/>
            <person name="Dai R."/>
            <person name="Chen F."/>
            <person name="Li S."/>
            <person name="Ye C."/>
            <person name="Du Z."/>
            <person name="Lin W."/>
            <person name="Wang J."/>
            <person name="Yu J."/>
            <person name="Yang H."/>
            <person name="Wang J."/>
            <person name="Huang P."/>
            <person name="Yang R."/>
        </authorList>
    </citation>
    <scope>NUCLEOTIDE SEQUENCE [LARGE SCALE GENOMIC DNA]</scope>
    <source>
        <strain>91001 / Biovar Mediaevalis</strain>
        <plasmid>pMT1 (pMT-1)</plasmid>
    </source>
</reference>
<accession>P26948</accession>
<geneLocation type="plasmid">
    <name>pMT1</name>
    <name>pMT-1</name>
</geneLocation>
<geneLocation type="plasmid">
    <name>pFra</name>
</geneLocation>
<name>CAF1_YERPE</name>
<organism>
    <name type="scientific">Yersinia pestis</name>
    <dbReference type="NCBI Taxonomy" id="632"/>
    <lineage>
        <taxon>Bacteria</taxon>
        <taxon>Pseudomonadati</taxon>
        <taxon>Pseudomonadota</taxon>
        <taxon>Gammaproteobacteria</taxon>
        <taxon>Enterobacterales</taxon>
        <taxon>Yersiniaceae</taxon>
        <taxon>Yersinia</taxon>
    </lineage>
</organism>